<dbReference type="EC" id="2.2.1.7" evidence="1"/>
<dbReference type="EMBL" id="CP000437">
    <property type="protein sequence ID" value="ABI82935.1"/>
    <property type="molecule type" value="Genomic_DNA"/>
</dbReference>
<dbReference type="RefSeq" id="WP_003016001.1">
    <property type="nucleotide sequence ID" value="NC_017463.1"/>
</dbReference>
<dbReference type="SMR" id="Q0BLU9"/>
<dbReference type="KEGG" id="fth:FTH_1047"/>
<dbReference type="UniPathway" id="UPA00064">
    <property type="reaction ID" value="UER00091"/>
</dbReference>
<dbReference type="GO" id="GO:0005829">
    <property type="term" value="C:cytosol"/>
    <property type="evidence" value="ECO:0007669"/>
    <property type="project" value="TreeGrafter"/>
</dbReference>
<dbReference type="GO" id="GO:0008661">
    <property type="term" value="F:1-deoxy-D-xylulose-5-phosphate synthase activity"/>
    <property type="evidence" value="ECO:0007669"/>
    <property type="project" value="UniProtKB-UniRule"/>
</dbReference>
<dbReference type="GO" id="GO:0000287">
    <property type="term" value="F:magnesium ion binding"/>
    <property type="evidence" value="ECO:0007669"/>
    <property type="project" value="UniProtKB-UniRule"/>
</dbReference>
<dbReference type="GO" id="GO:0030976">
    <property type="term" value="F:thiamine pyrophosphate binding"/>
    <property type="evidence" value="ECO:0007669"/>
    <property type="project" value="UniProtKB-UniRule"/>
</dbReference>
<dbReference type="GO" id="GO:0052865">
    <property type="term" value="P:1-deoxy-D-xylulose 5-phosphate biosynthetic process"/>
    <property type="evidence" value="ECO:0007669"/>
    <property type="project" value="UniProtKB-UniPathway"/>
</dbReference>
<dbReference type="GO" id="GO:0019288">
    <property type="term" value="P:isopentenyl diphosphate biosynthetic process, methylerythritol 4-phosphate pathway"/>
    <property type="evidence" value="ECO:0007669"/>
    <property type="project" value="TreeGrafter"/>
</dbReference>
<dbReference type="GO" id="GO:0016114">
    <property type="term" value="P:terpenoid biosynthetic process"/>
    <property type="evidence" value="ECO:0007669"/>
    <property type="project" value="UniProtKB-UniRule"/>
</dbReference>
<dbReference type="GO" id="GO:0009228">
    <property type="term" value="P:thiamine biosynthetic process"/>
    <property type="evidence" value="ECO:0007669"/>
    <property type="project" value="UniProtKB-UniRule"/>
</dbReference>
<dbReference type="CDD" id="cd02007">
    <property type="entry name" value="TPP_DXS"/>
    <property type="match status" value="1"/>
</dbReference>
<dbReference type="CDD" id="cd07033">
    <property type="entry name" value="TPP_PYR_DXS_TK_like"/>
    <property type="match status" value="1"/>
</dbReference>
<dbReference type="FunFam" id="3.40.50.970:FF:000005">
    <property type="entry name" value="1-deoxy-D-xylulose-5-phosphate synthase"/>
    <property type="match status" value="1"/>
</dbReference>
<dbReference type="Gene3D" id="3.40.50.920">
    <property type="match status" value="1"/>
</dbReference>
<dbReference type="Gene3D" id="3.40.50.970">
    <property type="match status" value="2"/>
</dbReference>
<dbReference type="HAMAP" id="MF_00315">
    <property type="entry name" value="DXP_synth"/>
    <property type="match status" value="1"/>
</dbReference>
<dbReference type="InterPro" id="IPR005477">
    <property type="entry name" value="Dxylulose-5-P_synthase"/>
</dbReference>
<dbReference type="InterPro" id="IPR029061">
    <property type="entry name" value="THDP-binding"/>
</dbReference>
<dbReference type="InterPro" id="IPR009014">
    <property type="entry name" value="Transketo_C/PFOR_II"/>
</dbReference>
<dbReference type="InterPro" id="IPR005475">
    <property type="entry name" value="Transketolase-like_Pyr-bd"/>
</dbReference>
<dbReference type="InterPro" id="IPR020826">
    <property type="entry name" value="Transketolase_BS"/>
</dbReference>
<dbReference type="InterPro" id="IPR033248">
    <property type="entry name" value="Transketolase_C"/>
</dbReference>
<dbReference type="InterPro" id="IPR049557">
    <property type="entry name" value="Transketolase_CS"/>
</dbReference>
<dbReference type="NCBIfam" id="TIGR00204">
    <property type="entry name" value="dxs"/>
    <property type="match status" value="1"/>
</dbReference>
<dbReference type="NCBIfam" id="NF003933">
    <property type="entry name" value="PRK05444.2-2"/>
    <property type="match status" value="1"/>
</dbReference>
<dbReference type="PANTHER" id="PTHR43322">
    <property type="entry name" value="1-D-DEOXYXYLULOSE 5-PHOSPHATE SYNTHASE-RELATED"/>
    <property type="match status" value="1"/>
</dbReference>
<dbReference type="PANTHER" id="PTHR43322:SF5">
    <property type="entry name" value="1-DEOXY-D-XYLULOSE-5-PHOSPHATE SYNTHASE, CHLOROPLASTIC"/>
    <property type="match status" value="1"/>
</dbReference>
<dbReference type="Pfam" id="PF13292">
    <property type="entry name" value="DXP_synthase_N"/>
    <property type="match status" value="1"/>
</dbReference>
<dbReference type="Pfam" id="PF02779">
    <property type="entry name" value="Transket_pyr"/>
    <property type="match status" value="1"/>
</dbReference>
<dbReference type="Pfam" id="PF02780">
    <property type="entry name" value="Transketolase_C"/>
    <property type="match status" value="1"/>
</dbReference>
<dbReference type="SMART" id="SM00861">
    <property type="entry name" value="Transket_pyr"/>
    <property type="match status" value="1"/>
</dbReference>
<dbReference type="SUPFAM" id="SSF52518">
    <property type="entry name" value="Thiamin diphosphate-binding fold (THDP-binding)"/>
    <property type="match status" value="2"/>
</dbReference>
<dbReference type="SUPFAM" id="SSF52922">
    <property type="entry name" value="TK C-terminal domain-like"/>
    <property type="match status" value="1"/>
</dbReference>
<dbReference type="PROSITE" id="PS00801">
    <property type="entry name" value="TRANSKETOLASE_1"/>
    <property type="match status" value="1"/>
</dbReference>
<dbReference type="PROSITE" id="PS00802">
    <property type="entry name" value="TRANSKETOLASE_2"/>
    <property type="match status" value="1"/>
</dbReference>
<keyword id="KW-0414">Isoprene biosynthesis</keyword>
<keyword id="KW-0460">Magnesium</keyword>
<keyword id="KW-0479">Metal-binding</keyword>
<keyword id="KW-0784">Thiamine biosynthesis</keyword>
<keyword id="KW-0786">Thiamine pyrophosphate</keyword>
<keyword id="KW-0808">Transferase</keyword>
<feature type="chain" id="PRO_1000019028" description="1-deoxy-D-xylulose-5-phosphate synthase">
    <location>
        <begin position="1"/>
        <end position="615"/>
    </location>
</feature>
<feature type="binding site" evidence="1">
    <location>
        <position position="76"/>
    </location>
    <ligand>
        <name>thiamine diphosphate</name>
        <dbReference type="ChEBI" id="CHEBI:58937"/>
    </ligand>
</feature>
<feature type="binding site" evidence="1">
    <location>
        <begin position="117"/>
        <end position="119"/>
    </location>
    <ligand>
        <name>thiamine diphosphate</name>
        <dbReference type="ChEBI" id="CHEBI:58937"/>
    </ligand>
</feature>
<feature type="binding site" evidence="1">
    <location>
        <position position="148"/>
    </location>
    <ligand>
        <name>Mg(2+)</name>
        <dbReference type="ChEBI" id="CHEBI:18420"/>
    </ligand>
</feature>
<feature type="binding site" evidence="1">
    <location>
        <begin position="149"/>
        <end position="150"/>
    </location>
    <ligand>
        <name>thiamine diphosphate</name>
        <dbReference type="ChEBI" id="CHEBI:58937"/>
    </ligand>
</feature>
<feature type="binding site" evidence="1">
    <location>
        <position position="177"/>
    </location>
    <ligand>
        <name>Mg(2+)</name>
        <dbReference type="ChEBI" id="CHEBI:18420"/>
    </ligand>
</feature>
<feature type="binding site" evidence="1">
    <location>
        <position position="177"/>
    </location>
    <ligand>
        <name>thiamine diphosphate</name>
        <dbReference type="ChEBI" id="CHEBI:58937"/>
    </ligand>
</feature>
<feature type="binding site" evidence="1">
    <location>
        <position position="284"/>
    </location>
    <ligand>
        <name>thiamine diphosphate</name>
        <dbReference type="ChEBI" id="CHEBI:58937"/>
    </ligand>
</feature>
<feature type="binding site" evidence="1">
    <location>
        <position position="365"/>
    </location>
    <ligand>
        <name>thiamine diphosphate</name>
        <dbReference type="ChEBI" id="CHEBI:58937"/>
    </ligand>
</feature>
<name>DXS_FRATO</name>
<gene>
    <name evidence="1" type="primary">dxs</name>
    <name type="ordered locus">FTH_1047</name>
</gene>
<reference key="1">
    <citation type="journal article" date="2006" name="J. Bacteriol.">
        <title>Chromosome rearrangement and diversification of Francisella tularensis revealed by the type B (OSU18) genome sequence.</title>
        <authorList>
            <person name="Petrosino J.F."/>
            <person name="Xiang Q."/>
            <person name="Karpathy S.E."/>
            <person name="Jiang H."/>
            <person name="Yerrapragada S."/>
            <person name="Liu Y."/>
            <person name="Gioia J."/>
            <person name="Hemphill L."/>
            <person name="Gonzalez A."/>
            <person name="Raghavan T.M."/>
            <person name="Uzman A."/>
            <person name="Fox G.E."/>
            <person name="Highlander S."/>
            <person name="Reichard M."/>
            <person name="Morton R.J."/>
            <person name="Clinkenbeard K.D."/>
            <person name="Weinstock G.M."/>
        </authorList>
    </citation>
    <scope>NUCLEOTIDE SEQUENCE [LARGE SCALE GENOMIC DNA]</scope>
    <source>
        <strain>OSU18</strain>
    </source>
</reference>
<comment type="function">
    <text evidence="1">Catalyzes the acyloin condensation reaction between C atoms 2 and 3 of pyruvate and glyceraldehyde 3-phosphate to yield 1-deoxy-D-xylulose-5-phosphate (DXP).</text>
</comment>
<comment type="catalytic activity">
    <reaction evidence="1">
        <text>D-glyceraldehyde 3-phosphate + pyruvate + H(+) = 1-deoxy-D-xylulose 5-phosphate + CO2</text>
        <dbReference type="Rhea" id="RHEA:12605"/>
        <dbReference type="ChEBI" id="CHEBI:15361"/>
        <dbReference type="ChEBI" id="CHEBI:15378"/>
        <dbReference type="ChEBI" id="CHEBI:16526"/>
        <dbReference type="ChEBI" id="CHEBI:57792"/>
        <dbReference type="ChEBI" id="CHEBI:59776"/>
        <dbReference type="EC" id="2.2.1.7"/>
    </reaction>
</comment>
<comment type="cofactor">
    <cofactor evidence="1">
        <name>Mg(2+)</name>
        <dbReference type="ChEBI" id="CHEBI:18420"/>
    </cofactor>
    <text evidence="1">Binds 1 Mg(2+) ion per subunit.</text>
</comment>
<comment type="cofactor">
    <cofactor evidence="1">
        <name>thiamine diphosphate</name>
        <dbReference type="ChEBI" id="CHEBI:58937"/>
    </cofactor>
    <text evidence="1">Binds 1 thiamine pyrophosphate per subunit.</text>
</comment>
<comment type="pathway">
    <text evidence="1">Metabolic intermediate biosynthesis; 1-deoxy-D-xylulose 5-phosphate biosynthesis; 1-deoxy-D-xylulose 5-phosphate from D-glyceraldehyde 3-phosphate and pyruvate: step 1/1.</text>
</comment>
<comment type="subunit">
    <text evidence="1">Homodimer.</text>
</comment>
<comment type="similarity">
    <text evidence="1">Belongs to the transketolase family. DXPS subfamily.</text>
</comment>
<protein>
    <recommendedName>
        <fullName evidence="1">1-deoxy-D-xylulose-5-phosphate synthase</fullName>
        <ecNumber evidence="1">2.2.1.7</ecNumber>
    </recommendedName>
    <alternativeName>
        <fullName evidence="1">1-deoxyxylulose-5-phosphate synthase</fullName>
        <shortName evidence="1">DXP synthase</shortName>
        <shortName evidence="1">DXPS</shortName>
    </alternativeName>
</protein>
<organism>
    <name type="scientific">Francisella tularensis subsp. holarctica (strain OSU18)</name>
    <dbReference type="NCBI Taxonomy" id="393011"/>
    <lineage>
        <taxon>Bacteria</taxon>
        <taxon>Pseudomonadati</taxon>
        <taxon>Pseudomonadota</taxon>
        <taxon>Gammaproteobacteria</taxon>
        <taxon>Thiotrichales</taxon>
        <taxon>Francisellaceae</taxon>
        <taxon>Francisella</taxon>
    </lineage>
</organism>
<proteinExistence type="inferred from homology"/>
<evidence type="ECO:0000255" key="1">
    <source>
        <dbReference type="HAMAP-Rule" id="MF_00315"/>
    </source>
</evidence>
<sequence>MSKYTILDKINTPSDLKLIPESQLKILSAELRAFLVDTLDVSGGHFASSLGATELTVALHYVYNAPYDNIVWDVGHQTYIHKILTGRKDKLVTIKKDGGISGFPKRSESEYDTFGVGHSSTSISAALGMAIADRLQGKSSNTVAVIGDGAITGGMAFEALNHAGGIKEDILVILNDNEMSISDNVGGLSAHFSKIISGGFYNSIREKGKEVLKNIPPIFEFVKKIETQTKGMFVPANFFEDLGFYYVGPIDGHDVTELVKTLRILKDHKGPKLLHVITKKGKGYTKAESDPIKFHHVAPSFHSGENITTKISKPTYSNIFGDWICQKAAKDKRLVGITPAMKEGSDLIRFSQLYPHRYFDVAIAEQHAVTFAGGLACQGLKPVVAIYSTFLQRAYDQVIHDIALQNLDVLYAVDRAGLVGADGATHDGSFDLAFMRCIPNHVIMTPSDENETYHMLEFGYEYNGPAMVRYPRGAGIGAEITGSLDLELGKAKIVKQGSKIAILNFGTLLPLAKQLAEKYHATVIDMRFVKPLDKIMLDKVSQTHEIILTLEENCIAGGAGSAVNEYFVAKDLSNKIIVRNFGLQDKFLNHGTKDLLLAQSKLCVENISKELDKLI</sequence>
<accession>Q0BLU9</accession>